<name>BIP_APLCA</name>
<feature type="signal peptide" evidence="3">
    <location>
        <begin position="1"/>
        <end position="22"/>
    </location>
</feature>
<feature type="chain" id="PRO_0000013572" description="Endoplasmic reticulum chaperone BiP">
    <location>
        <begin position="23"/>
        <end position="667"/>
    </location>
</feature>
<feature type="region of interest" description="Nucleotide-binding (NBD)" evidence="1">
    <location>
        <begin position="135"/>
        <end position="289"/>
    </location>
</feature>
<feature type="region of interest" description="Substrate-binding (SBD)" evidence="1">
    <location>
        <begin position="409"/>
        <end position="509"/>
    </location>
</feature>
<feature type="region of interest" description="Disordered" evidence="5">
    <location>
        <begin position="641"/>
        <end position="667"/>
    </location>
</feature>
<feature type="short sequence motif" description="Prevents secretion from ER" evidence="4">
    <location>
        <begin position="664"/>
        <end position="667"/>
    </location>
</feature>
<feature type="compositionally biased region" description="Acidic residues" evidence="5">
    <location>
        <begin position="655"/>
        <end position="667"/>
    </location>
</feature>
<feature type="binding site" evidence="1">
    <location>
        <begin position="46"/>
        <end position="49"/>
    </location>
    <ligand>
        <name>ATP</name>
        <dbReference type="ChEBI" id="CHEBI:30616"/>
    </ligand>
</feature>
<feature type="binding site" evidence="1">
    <location>
        <position position="106"/>
    </location>
    <ligand>
        <name>ATP</name>
        <dbReference type="ChEBI" id="CHEBI:30616"/>
    </ligand>
</feature>
<feature type="binding site" evidence="1">
    <location>
        <begin position="236"/>
        <end position="238"/>
    </location>
    <ligand>
        <name>ATP</name>
        <dbReference type="ChEBI" id="CHEBI:30616"/>
    </ligand>
</feature>
<feature type="binding site" evidence="1">
    <location>
        <begin position="302"/>
        <end position="309"/>
    </location>
    <ligand>
        <name>ATP</name>
        <dbReference type="ChEBI" id="CHEBI:30616"/>
    </ligand>
</feature>
<feature type="binding site" evidence="1">
    <location>
        <begin position="373"/>
        <end position="376"/>
    </location>
    <ligand>
        <name>ATP</name>
        <dbReference type="ChEBI" id="CHEBI:30616"/>
    </ligand>
</feature>
<dbReference type="EC" id="3.6.4.10" evidence="1"/>
<dbReference type="EMBL" id="Z15041">
    <property type="protein sequence ID" value="CAA78759.1"/>
    <property type="molecule type" value="mRNA"/>
</dbReference>
<dbReference type="PIR" id="D44261">
    <property type="entry name" value="D44261"/>
</dbReference>
<dbReference type="PIR" id="S24782">
    <property type="entry name" value="S24782"/>
</dbReference>
<dbReference type="RefSeq" id="NP_001191581.1">
    <property type="nucleotide sequence ID" value="NM_001204652.1"/>
</dbReference>
<dbReference type="SMR" id="Q16956"/>
<dbReference type="EnsemblMetazoa" id="NM_001204652.1">
    <property type="protein sequence ID" value="NP_001191581.1"/>
    <property type="gene ID" value="LOC100533358"/>
</dbReference>
<dbReference type="GeneID" id="100533358"/>
<dbReference type="OrthoDB" id="2401965at2759"/>
<dbReference type="Proteomes" id="UP000694888">
    <property type="component" value="Unplaced"/>
</dbReference>
<dbReference type="GO" id="GO:0005788">
    <property type="term" value="C:endoplasmic reticulum lumen"/>
    <property type="evidence" value="ECO:0007669"/>
    <property type="project" value="UniProtKB-SubCell"/>
</dbReference>
<dbReference type="GO" id="GO:0005524">
    <property type="term" value="F:ATP binding"/>
    <property type="evidence" value="ECO:0007669"/>
    <property type="project" value="UniProtKB-KW"/>
</dbReference>
<dbReference type="GO" id="GO:0016887">
    <property type="term" value="F:ATP hydrolysis activity"/>
    <property type="evidence" value="ECO:0007669"/>
    <property type="project" value="RHEA"/>
</dbReference>
<dbReference type="GO" id="GO:0140662">
    <property type="term" value="F:ATP-dependent protein folding chaperone"/>
    <property type="evidence" value="ECO:0007669"/>
    <property type="project" value="InterPro"/>
</dbReference>
<dbReference type="CDD" id="cd10241">
    <property type="entry name" value="ASKHA_NBD_HSP70_BiP"/>
    <property type="match status" value="1"/>
</dbReference>
<dbReference type="FunFam" id="3.30.420.40:FF:000720">
    <property type="entry name" value="Endoplasmic reticulum chaperone BiP"/>
    <property type="match status" value="1"/>
</dbReference>
<dbReference type="FunFam" id="3.90.640.10:FF:000153">
    <property type="entry name" value="Endoplasmic reticulum chaperone BiP"/>
    <property type="match status" value="1"/>
</dbReference>
<dbReference type="FunFam" id="2.60.34.10:FF:000002">
    <property type="entry name" value="Heat shock 70 kDa"/>
    <property type="match status" value="1"/>
</dbReference>
<dbReference type="FunFam" id="3.30.30.30:FF:000001">
    <property type="entry name" value="heat shock 70 kDa protein-like"/>
    <property type="match status" value="1"/>
</dbReference>
<dbReference type="FunFam" id="1.20.1270.10:FF:000016">
    <property type="entry name" value="Heat shock protein 70"/>
    <property type="match status" value="1"/>
</dbReference>
<dbReference type="Gene3D" id="1.20.1270.10">
    <property type="match status" value="1"/>
</dbReference>
<dbReference type="Gene3D" id="3.30.420.40">
    <property type="match status" value="2"/>
</dbReference>
<dbReference type="Gene3D" id="3.90.640.10">
    <property type="entry name" value="Actin, Chain A, domain 4"/>
    <property type="match status" value="1"/>
</dbReference>
<dbReference type="Gene3D" id="2.60.34.10">
    <property type="entry name" value="Substrate Binding Domain Of DNAk, Chain A, domain 1"/>
    <property type="match status" value="1"/>
</dbReference>
<dbReference type="InterPro" id="IPR043129">
    <property type="entry name" value="ATPase_NBD"/>
</dbReference>
<dbReference type="InterPro" id="IPR042050">
    <property type="entry name" value="BIP_NBD"/>
</dbReference>
<dbReference type="InterPro" id="IPR018181">
    <property type="entry name" value="Heat_shock_70_CS"/>
</dbReference>
<dbReference type="InterPro" id="IPR029048">
    <property type="entry name" value="HSP70_C_sf"/>
</dbReference>
<dbReference type="InterPro" id="IPR029047">
    <property type="entry name" value="HSP70_peptide-bd_sf"/>
</dbReference>
<dbReference type="InterPro" id="IPR013126">
    <property type="entry name" value="Hsp_70_fam"/>
</dbReference>
<dbReference type="NCBIfam" id="NF001413">
    <property type="entry name" value="PRK00290.1"/>
    <property type="match status" value="1"/>
</dbReference>
<dbReference type="PANTHER" id="PTHR19375">
    <property type="entry name" value="HEAT SHOCK PROTEIN 70KDA"/>
    <property type="match status" value="1"/>
</dbReference>
<dbReference type="Pfam" id="PF00012">
    <property type="entry name" value="HSP70"/>
    <property type="match status" value="1"/>
</dbReference>
<dbReference type="PRINTS" id="PR00301">
    <property type="entry name" value="HEATSHOCK70"/>
</dbReference>
<dbReference type="SUPFAM" id="SSF53067">
    <property type="entry name" value="Actin-like ATPase domain"/>
    <property type="match status" value="2"/>
</dbReference>
<dbReference type="SUPFAM" id="SSF100934">
    <property type="entry name" value="Heat shock protein 70kD (HSP70), C-terminal subdomain"/>
    <property type="match status" value="1"/>
</dbReference>
<dbReference type="SUPFAM" id="SSF100920">
    <property type="entry name" value="Heat shock protein 70kD (HSP70), peptide-binding domain"/>
    <property type="match status" value="1"/>
</dbReference>
<dbReference type="PROSITE" id="PS00014">
    <property type="entry name" value="ER_TARGET"/>
    <property type="match status" value="1"/>
</dbReference>
<dbReference type="PROSITE" id="PS00297">
    <property type="entry name" value="HSP70_1"/>
    <property type="match status" value="1"/>
</dbReference>
<dbReference type="PROSITE" id="PS00329">
    <property type="entry name" value="HSP70_2"/>
    <property type="match status" value="1"/>
</dbReference>
<dbReference type="PROSITE" id="PS01036">
    <property type="entry name" value="HSP70_3"/>
    <property type="match status" value="1"/>
</dbReference>
<reference key="1">
    <citation type="journal article" date="1992" name="J. Cell Biol.">
        <title>Long-term sensitization training in Aplysia leads to an increase in the expression of BiP, the major protein chaperon of the ER.</title>
        <authorList>
            <person name="Kuhl D."/>
            <person name="Kennedy T."/>
            <person name="Barzilai A."/>
            <person name="Kandel E."/>
        </authorList>
    </citation>
    <scope>NUCLEOTIDE SEQUENCE [MRNA]</scope>
    <scope>PROTEIN SEQUENCE OF 368-382</scope>
</reference>
<sequence length="667" mass="73698">MDRFTPFFLLVILFSSNLLVRADGDEEDEGDKKKSEVGTVIGIDLGTTYSCVGVFKNGRVDIIANDQGNRITPSYVAFTADGERLIGDAAKNQLTSNPENTIFDVKRLIGRTFDDKSVQHDIKFYPFKVTNANNKPHIQAATGEGDRSFAPEEISAMVLSKMRDIAEEYLGKKITNAVVTVPAYFNDAQRQATKDAGTIAGLNVMRIINEPTAAAIAYGLDKKEGEKNILVFDLGGGTFDVSLLTIDNGVFEVVSTNGDTHLGGEDFDQRVMEHFIKLYKKKKGKDIRKDNRAVQKLRREVEKAKRALSSAHQVRLEIESFFDGEDFSESLTRAKFEELNMDLFRSTMKPVKQVLEDADLKTDDIDEIVLVGGSTRIPKVQQLVKEYFNGKEPSRGINPDEAVAYGAAVQAGVLSGEEDTGDLVLLDVNPLTMGIETVGGVMTKLIPRNTVIPTKKSQIFSTAADNQPTVTIQVYEGERSMTKDNHLLGKFDLTGIPPAPRGVPQIEVTFEIDVNGILKVTAEDKGTGSKNQIVIQNDQNRLSPEDIERMINDAEKYADEDKKVKEKVDAKNELESYAYSLKNQIGDKEKLGAKLSDEDKEKITEAVDEAIKWLESNAEAESEAFNEKKTELEGIVQPIMTKLYEQSGGAPPPSGEEESEEAEKDEL</sequence>
<accession>Q16956</accession>
<comment type="function">
    <text evidence="2">Probably plays a role in facilitating the assembly of multimeric protein complexes inside the ER. Is required for secretory polypeptide translocation. May physically associate with SEC63 protein in the endoplasmic reticulum and this interaction may be regulated by ATP hydrolysis.</text>
</comment>
<comment type="catalytic activity">
    <reaction evidence="1">
        <text>ATP + H2O = ADP + phosphate + H(+)</text>
        <dbReference type="Rhea" id="RHEA:13065"/>
        <dbReference type="ChEBI" id="CHEBI:15377"/>
        <dbReference type="ChEBI" id="CHEBI:15378"/>
        <dbReference type="ChEBI" id="CHEBI:30616"/>
        <dbReference type="ChEBI" id="CHEBI:43474"/>
        <dbReference type="ChEBI" id="CHEBI:456216"/>
        <dbReference type="EC" id="3.6.4.10"/>
    </reaction>
</comment>
<comment type="activity regulation">
    <text evidence="1">The chaperone activity is regulated by ATP-induced allosteric coupling of the nucleotide-binding (NBD) and substrate-binding (SBD) domains. In the ADP-bound and nucleotide-free (apo) states, the two domains have little interaction. In contrast, in the ATP-bound state the two domains are tightly coupled, which results in drastically accelerated kinetics in both binding and release of polypeptide substrates. J domain-containing co-chaperones stimulate the ATPase activity and are required for efficient substrate recognition.</text>
</comment>
<comment type="subcellular location">
    <subcellularLocation>
        <location evidence="2 4">Endoplasmic reticulum lumen</location>
    </subcellularLocation>
</comment>
<comment type="similarity">
    <text evidence="7">Belongs to the heat shock protein 70 family.</text>
</comment>
<organism>
    <name type="scientific">Aplysia californica</name>
    <name type="common">California sea hare</name>
    <dbReference type="NCBI Taxonomy" id="6500"/>
    <lineage>
        <taxon>Eukaryota</taxon>
        <taxon>Metazoa</taxon>
        <taxon>Spiralia</taxon>
        <taxon>Lophotrochozoa</taxon>
        <taxon>Mollusca</taxon>
        <taxon>Gastropoda</taxon>
        <taxon>Heterobranchia</taxon>
        <taxon>Euthyneura</taxon>
        <taxon>Tectipleura</taxon>
        <taxon>Aplysiida</taxon>
        <taxon>Aplysioidea</taxon>
        <taxon>Aplysiidae</taxon>
        <taxon>Aplysia</taxon>
    </lineage>
</organism>
<keyword id="KW-0067">ATP-binding</keyword>
<keyword id="KW-0143">Chaperone</keyword>
<keyword id="KW-0903">Direct protein sequencing</keyword>
<keyword id="KW-0256">Endoplasmic reticulum</keyword>
<keyword id="KW-0378">Hydrolase</keyword>
<keyword id="KW-0547">Nucleotide-binding</keyword>
<keyword id="KW-0732">Signal</keyword>
<evidence type="ECO:0000250" key="1">
    <source>
        <dbReference type="UniProtKB" id="P11021"/>
    </source>
</evidence>
<evidence type="ECO:0000250" key="2">
    <source>
        <dbReference type="UniProtKB" id="P16474"/>
    </source>
</evidence>
<evidence type="ECO:0000255" key="3"/>
<evidence type="ECO:0000255" key="4">
    <source>
        <dbReference type="PROSITE-ProRule" id="PRU10138"/>
    </source>
</evidence>
<evidence type="ECO:0000256" key="5">
    <source>
        <dbReference type="SAM" id="MobiDB-lite"/>
    </source>
</evidence>
<evidence type="ECO:0000303" key="6">
    <source>
    </source>
</evidence>
<evidence type="ECO:0000305" key="7"/>
<proteinExistence type="evidence at protein level"/>
<protein>
    <recommendedName>
        <fullName evidence="7">Endoplasmic reticulum chaperone BiP</fullName>
        <ecNumber evidence="1">3.6.4.10</ecNumber>
    </recommendedName>
    <alternativeName>
        <fullName evidence="7">Immunoglobulin heavy chain-binding protein homolog</fullName>
        <shortName evidence="7">BiP</shortName>
    </alternativeName>
    <alternativeName>
        <fullName evidence="6">Protein 1603</fullName>
    </alternativeName>
</protein>